<keyword id="KW-0002">3D-structure</keyword>
<keyword id="KW-0945">Host-virus interaction</keyword>
<keyword id="KW-1090">Inhibition of host innate immune response by virus</keyword>
<keyword id="KW-0899">Viral immunoevasion</keyword>
<protein>
    <recommendedName>
        <fullName evidence="3">Gabija anti-defense 1</fullName>
        <shortName evidence="3">Gad1</shortName>
    </recommendedName>
</protein>
<dbReference type="EMBL" id="KY030782">
    <property type="protein sequence ID" value="APD21271.1"/>
    <property type="molecule type" value="Genomic_DNA"/>
</dbReference>
<dbReference type="PDB" id="8U7I">
    <property type="method" value="EM"/>
    <property type="resolution" value="2.57 A"/>
    <property type="chains" value="I/J/K/L/M=1-295"/>
</dbReference>
<dbReference type="PDBsum" id="8U7I"/>
<dbReference type="EMDB" id="EMD-41983"/>
<dbReference type="SMR" id="A0A1P8CWZ3"/>
<dbReference type="Proteomes" id="UP000188400">
    <property type="component" value="Genome"/>
</dbReference>
<dbReference type="GO" id="GO:0052170">
    <property type="term" value="P:symbiont-mediated suppression of host innate immune response"/>
    <property type="evidence" value="ECO:0007669"/>
    <property type="project" value="UniProtKB-KW"/>
</dbReference>
<gene>
    <name evidence="3" type="primary">gad1</name>
</gene>
<gene>
    <name evidence="5" type="ORF">phi3T_128</name>
</gene>
<organism>
    <name type="scientific">Bacillus phage phi3T</name>
    <name type="common">Bacteriophage phi-3T</name>
    <dbReference type="NCBI Taxonomy" id="10736"/>
    <lineage>
        <taxon>Viruses</taxon>
        <taxon>Duplodnaviria</taxon>
        <taxon>Heunggongvirae</taxon>
        <taxon>Uroviricota</taxon>
        <taxon>Caudoviricetes</taxon>
        <taxon>Spbetavirus</taxon>
    </lineage>
</organism>
<feature type="chain" id="PRO_0000460338" description="Gabija anti-defense 1">
    <location>
        <begin position="1"/>
        <end position="295"/>
    </location>
</feature>
<feature type="turn" evidence="7">
    <location>
        <begin position="147"/>
        <end position="149"/>
    </location>
</feature>
<feature type="helix" evidence="7">
    <location>
        <begin position="152"/>
        <end position="155"/>
    </location>
</feature>
<feature type="strand" evidence="7">
    <location>
        <begin position="156"/>
        <end position="158"/>
    </location>
</feature>
<feature type="helix" evidence="7">
    <location>
        <begin position="164"/>
        <end position="178"/>
    </location>
</feature>
<feature type="turn" evidence="7">
    <location>
        <begin position="181"/>
        <end position="183"/>
    </location>
</feature>
<feature type="strand" evidence="7">
    <location>
        <begin position="184"/>
        <end position="189"/>
    </location>
</feature>
<feature type="strand" evidence="7">
    <location>
        <begin position="194"/>
        <end position="211"/>
    </location>
</feature>
<feature type="turn" evidence="7">
    <location>
        <begin position="212"/>
        <end position="215"/>
    </location>
</feature>
<feature type="strand" evidence="7">
    <location>
        <begin position="217"/>
        <end position="219"/>
    </location>
</feature>
<feature type="strand" evidence="7">
    <location>
        <begin position="223"/>
        <end position="241"/>
    </location>
</feature>
<feature type="strand" evidence="7">
    <location>
        <begin position="253"/>
        <end position="256"/>
    </location>
</feature>
<feature type="helix" evidence="7">
    <location>
        <begin position="257"/>
        <end position="276"/>
    </location>
</feature>
<feature type="helix" evidence="7">
    <location>
        <begin position="283"/>
        <end position="285"/>
    </location>
</feature>
<feature type="strand" evidence="7">
    <location>
        <begin position="288"/>
        <end position="291"/>
    </location>
</feature>
<reference key="1">
    <citation type="journal article" date="2017" name="Nature">
        <title>Communication between viruses guides lysis-lysogeny decisions.</title>
        <authorList>
            <person name="Erez Z."/>
            <person name="Steinberger-Levy I."/>
            <person name="Shamir M."/>
            <person name="Doron S."/>
            <person name="Stokar-Avihail A."/>
            <person name="Peleg Y."/>
            <person name="Melamed S."/>
            <person name="Leavitt A."/>
            <person name="Savidor A."/>
            <person name="Albeck S."/>
            <person name="Amitai G."/>
            <person name="Sorek R."/>
        </authorList>
    </citation>
    <scope>NUCLEOTIDE SEQUENCE [LARGE SCALE GENOMIC DNA]</scope>
</reference>
<reference key="2">
    <citation type="journal article" date="2024" name="Nature">
        <title>Phages overcome bacterial immunity via diverse anti-defence proteins.</title>
        <authorList>
            <person name="Yirmiya E."/>
            <person name="Leavitt A."/>
            <person name="Lu A."/>
            <person name="Ragucci A.E."/>
            <person name="Avraham C."/>
            <person name="Osterman I."/>
            <person name="Garb J."/>
            <person name="Antine S.P."/>
            <person name="Mooney S.E."/>
            <person name="Hobbs S.J."/>
            <person name="Kranzusch P.J."/>
            <person name="Amitai G."/>
            <person name="Sorek R."/>
        </authorList>
    </citation>
    <scope>FUNCTION</scope>
    <scope>DISRUPTION PHENOTYPE</scope>
</reference>
<reference evidence="6" key="3">
    <citation type="journal article" date="2024" name="Nature">
        <title>Structural basis of Gabija anti-phage defence and viral immune evasion.</title>
        <authorList>
            <person name="Antine S.P."/>
            <person name="Johnson A.G."/>
            <person name="Mooney S.E."/>
            <person name="Leavitt A."/>
            <person name="Mayer M.L."/>
            <person name="Yirmiya E."/>
            <person name="Amitai G."/>
            <person name="Sorek R."/>
            <person name="Kranzusch P.J."/>
        </authorList>
    </citation>
    <scope>STRUCTURE BY ELECTRON MICROSCOPY (2.57 ANGSTROMS)</scope>
</reference>
<accession>A0A1P8CWZ3</accession>
<evidence type="ECO:0000269" key="1">
    <source>
    </source>
</evidence>
<evidence type="ECO:0000269" key="2">
    <source>
    </source>
</evidence>
<evidence type="ECO:0000303" key="3">
    <source>
    </source>
</evidence>
<evidence type="ECO:0000305" key="4"/>
<evidence type="ECO:0000312" key="5">
    <source>
        <dbReference type="EMBL" id="APD21271.1"/>
    </source>
</evidence>
<evidence type="ECO:0007744" key="6">
    <source>
        <dbReference type="PDB" id="8U7I"/>
    </source>
</evidence>
<evidence type="ECO:0007829" key="7">
    <source>
        <dbReference type="PDB" id="8U7I"/>
    </source>
</evidence>
<proteinExistence type="evidence at protein level"/>
<comment type="function">
    <text evidence="1">Counteracts the host Gabija antiviral defense system by suppressing the ability of Gabija to cleave DNA.</text>
</comment>
<comment type="subunit">
    <text evidence="2">Binds the Gabija complex as an octamer and inhibits its ability to bind and cleave DNA.</text>
</comment>
<comment type="disruption phenotype">
    <text evidence="1">Knockout of this gene prevents the phage to overcome the host Gabija defense.</text>
</comment>
<comment type="similarity">
    <text evidence="4">Belongs to the Caudoviricetes Gad1 anti-defense protein family.</text>
</comment>
<organismHost>
    <name type="scientific">Bacillus subtilis</name>
    <dbReference type="NCBI Taxonomy" id="1423"/>
</organismHost>
<name>GAD1_BPPHT</name>
<sequence length="295" mass="34865">MKLIGIKTSNCFLVSDNIEGKRYFHSQLDELLFDGKRATETYKSDWFKLEKEPSVIEKQMPAKKINHRYELKEGFQESELTPKVIKASYIGEDSEYYEVKGLYDLKFEEIPQQNEKIEFEMNVIEEIDGELKLQSHNFNLNYNLLDRIQTHPMLLETKPCYLSQEESYKIIRNHIKANINPKFARITSDYDFCLTVVKVLELYKPHEYIVDLNAMYKRRKPKLEKRFQTKREVEIYKVAPKAYQSYPIVEPFSGKDVEDLKSNIKKFLDDLMAKINEPLVECKCCKGRGVILNEN</sequence>